<name>PTR8_ARATH</name>
<evidence type="ECO:0000255" key="1"/>
<evidence type="ECO:0000269" key="2">
    <source>
    </source>
</evidence>
<evidence type="ECO:0000269" key="3">
    <source>
    </source>
</evidence>
<evidence type="ECO:0000269" key="4">
    <source>
    </source>
</evidence>
<evidence type="ECO:0000305" key="5"/>
<gene>
    <name type="primary">NPF2.9</name>
    <name type="synonym">NRT1.9</name>
    <name type="ordered locus">At1g18880</name>
    <name type="ORF">F6A14.2</name>
</gene>
<proteinExistence type="evidence at protein level"/>
<protein>
    <recommendedName>
        <fullName>Protein NRT1/ PTR FAMILY 2.9</fullName>
        <shortName>AtNPF2.9</shortName>
    </recommendedName>
    <alternativeName>
        <fullName>Nitrate transporter 1.9</fullName>
    </alternativeName>
</protein>
<sequence length="587" mass="65174">MEVEKTEKNIAEDDESKIIYRGWKVMPFIIGNETFEKLGIVGSSSNLVIYLTTVFNMKSITAAKVVNIYGGTSNFGTIVAAFLCDSYFGRYKTLSFAMIACFLGSVAMDLTAVIHPLHPAQCAKEIGSVCNGPSIGQIMFLAGAMVLLVIGAGGIRPCNLPFGADQFDPKTKEGKRGIESFFNWYFFTFTFAQMVSLTLIVYVQSNVSWSIGLAIPAILMLLGCIIFFAGSKLYVKVKASGSPIHSITRVIVVAIKKRRLKPVGPNELYNYIASDFKNSKLGHTEQFRFLDKSAIQTQDDKLNKDGSPVDAWKLCSMQQVEEVKCVIRVLPVWLSAALFYLAYIQQTTYTIFQSLQSDRRLGPGSFQIPAGSYTVFLMLGMTIFIPIYDRVLVPFLRKYTGRDGGITQLQRVGAGLFLCITSMMVSAIVEQYRRKVALTKPTLGLAPRKGAISSMSGMWLIPQLVLMGIADALAGVGQMEFYYKQFPENMRSFAGSLYYCGIGLASYLSTFLLSAVHDTTEGFSGGSWLPEDLNKGRLEYFYFLVAGMMTLNLAYFLLVSHWYRYKDVVAKDKDMDKTSAEFDKVSV</sequence>
<keyword id="KW-1003">Cell membrane</keyword>
<keyword id="KW-0472">Membrane</keyword>
<keyword id="KW-1185">Reference proteome</keyword>
<keyword id="KW-0812">Transmembrane</keyword>
<keyword id="KW-1133">Transmembrane helix</keyword>
<keyword id="KW-0813">Transport</keyword>
<accession>Q9M9V7</accession>
<feature type="chain" id="PRO_0000399942" description="Protein NRT1/ PTR FAMILY 2.9">
    <location>
        <begin position="1"/>
        <end position="587"/>
    </location>
</feature>
<feature type="transmembrane region" description="Helical" evidence="1">
    <location>
        <begin position="35"/>
        <end position="55"/>
    </location>
</feature>
<feature type="transmembrane region" description="Helical" evidence="1">
    <location>
        <begin position="65"/>
        <end position="85"/>
    </location>
</feature>
<feature type="transmembrane region" description="Helical" evidence="1">
    <location>
        <begin position="94"/>
        <end position="114"/>
    </location>
</feature>
<feature type="transmembrane region" description="Helical" evidence="1">
    <location>
        <begin position="135"/>
        <end position="155"/>
    </location>
</feature>
<feature type="transmembrane region" description="Helical" evidence="1">
    <location>
        <begin position="181"/>
        <end position="201"/>
    </location>
</feature>
<feature type="transmembrane region" description="Helical" evidence="1">
    <location>
        <begin position="209"/>
        <end position="229"/>
    </location>
</feature>
<feature type="transmembrane region" description="Helical" evidence="1">
    <location>
        <begin position="325"/>
        <end position="345"/>
    </location>
</feature>
<feature type="transmembrane region" description="Helical" evidence="1">
    <location>
        <begin position="368"/>
        <end position="388"/>
    </location>
</feature>
<feature type="transmembrane region" description="Helical" evidence="1">
    <location>
        <begin position="412"/>
        <end position="432"/>
    </location>
</feature>
<feature type="transmembrane region" description="Helical" evidence="1">
    <location>
        <begin position="457"/>
        <end position="477"/>
    </location>
</feature>
<feature type="transmembrane region" description="Helical" evidence="1">
    <location>
        <begin position="493"/>
        <end position="513"/>
    </location>
</feature>
<feature type="transmembrane region" description="Helical" evidence="1">
    <location>
        <begin position="540"/>
        <end position="560"/>
    </location>
</feature>
<comment type="function">
    <text evidence="3 4">Low-affinity nitrate transporter facilitating nitrate loading into root phloem. Not involved in dipeptides transport, but has a weak glucosinolate transport activity.</text>
</comment>
<comment type="biophysicochemical properties">
    <kinetics>
        <KM evidence="3">7 mM for nitrate (at pH 5.5)</KM>
    </kinetics>
</comment>
<comment type="subcellular location">
    <subcellularLocation>
        <location evidence="3">Cell membrane</location>
        <topology evidence="3">Multi-pass membrane protein</topology>
    </subcellularLocation>
</comment>
<comment type="tissue specificity">
    <text evidence="2 3">Expressed in roots, stems and major veins of the leaves. Detected in the companion cells of the root phloem.</text>
</comment>
<comment type="induction">
    <text evidence="3">Up-regulated by nitrate after long time exposure.</text>
</comment>
<comment type="disruption phenotype">
    <text evidence="3">Decreased nitrate content in root phloem exudates. Enhanced root-to shoot nitrate transport and plant growth under high nitrate conditions.</text>
</comment>
<comment type="similarity">
    <text evidence="5">Belongs to the major facilitator superfamily. Proton-dependent oligopeptide transporter (POT/PTR) (TC 2.A.17) family.</text>
</comment>
<dbReference type="EMBL" id="AC011809">
    <property type="protein sequence ID" value="AAF27093.1"/>
    <property type="molecule type" value="Genomic_DNA"/>
</dbReference>
<dbReference type="EMBL" id="CP002684">
    <property type="protein sequence ID" value="AEE29776.1"/>
    <property type="molecule type" value="Genomic_DNA"/>
</dbReference>
<dbReference type="EMBL" id="AY070054">
    <property type="protein sequence ID" value="AAL49811.1"/>
    <property type="molecule type" value="mRNA"/>
</dbReference>
<dbReference type="EMBL" id="AY117308">
    <property type="protein sequence ID" value="AAM51383.1"/>
    <property type="molecule type" value="mRNA"/>
</dbReference>
<dbReference type="PIR" id="G86322">
    <property type="entry name" value="G86322"/>
</dbReference>
<dbReference type="RefSeq" id="NP_173322.1">
    <property type="nucleotide sequence ID" value="NM_101745.5"/>
</dbReference>
<dbReference type="SMR" id="Q9M9V7"/>
<dbReference type="BioGRID" id="23708">
    <property type="interactions" value="26"/>
</dbReference>
<dbReference type="FunCoup" id="Q9M9V7">
    <property type="interactions" value="7"/>
</dbReference>
<dbReference type="IntAct" id="Q9M9V7">
    <property type="interactions" value="26"/>
</dbReference>
<dbReference type="STRING" id="3702.Q9M9V7"/>
<dbReference type="iPTMnet" id="Q9M9V7"/>
<dbReference type="PaxDb" id="3702-AT1G18880.1"/>
<dbReference type="ProteomicsDB" id="226448"/>
<dbReference type="EnsemblPlants" id="AT1G18880.1">
    <property type="protein sequence ID" value="AT1G18880.1"/>
    <property type="gene ID" value="AT1G18880"/>
</dbReference>
<dbReference type="GeneID" id="838469"/>
<dbReference type="Gramene" id="AT1G18880.1">
    <property type="protein sequence ID" value="AT1G18880.1"/>
    <property type="gene ID" value="AT1G18880"/>
</dbReference>
<dbReference type="KEGG" id="ath:AT1G18880"/>
<dbReference type="Araport" id="AT1G18880"/>
<dbReference type="TAIR" id="AT1G18880">
    <property type="gene designation" value="NPF2.9"/>
</dbReference>
<dbReference type="eggNOG" id="KOG1237">
    <property type="taxonomic scope" value="Eukaryota"/>
</dbReference>
<dbReference type="HOGENOM" id="CLU_009313_4_2_1"/>
<dbReference type="InParanoid" id="Q9M9V7"/>
<dbReference type="OMA" id="NSKLGHT"/>
<dbReference type="OrthoDB" id="8904098at2759"/>
<dbReference type="PhylomeDB" id="Q9M9V7"/>
<dbReference type="PRO" id="PR:Q9M9V7"/>
<dbReference type="Proteomes" id="UP000006548">
    <property type="component" value="Chromosome 1"/>
</dbReference>
<dbReference type="ExpressionAtlas" id="Q9M9V7">
    <property type="expression patterns" value="baseline and differential"/>
</dbReference>
<dbReference type="GO" id="GO:0005886">
    <property type="term" value="C:plasma membrane"/>
    <property type="evidence" value="ECO:0000314"/>
    <property type="project" value="TAIR"/>
</dbReference>
<dbReference type="GO" id="GO:0015112">
    <property type="term" value="F:nitrate transmembrane transporter activity"/>
    <property type="evidence" value="ECO:0000314"/>
    <property type="project" value="TAIR"/>
</dbReference>
<dbReference type="GO" id="GO:0090408">
    <property type="term" value="P:phloem nitrate loading"/>
    <property type="evidence" value="ECO:0000315"/>
    <property type="project" value="TAIR"/>
</dbReference>
<dbReference type="GO" id="GO:0010233">
    <property type="term" value="P:phloem transport"/>
    <property type="evidence" value="ECO:0000315"/>
    <property type="project" value="TAIR"/>
</dbReference>
<dbReference type="CDD" id="cd17416">
    <property type="entry name" value="MFS_NPF1_2"/>
    <property type="match status" value="1"/>
</dbReference>
<dbReference type="Gene3D" id="1.20.1250.20">
    <property type="entry name" value="MFS general substrate transporter like domains"/>
    <property type="match status" value="1"/>
</dbReference>
<dbReference type="InterPro" id="IPR036259">
    <property type="entry name" value="MFS_trans_sf"/>
</dbReference>
<dbReference type="InterPro" id="IPR000109">
    <property type="entry name" value="POT_fam"/>
</dbReference>
<dbReference type="PANTHER" id="PTHR11654">
    <property type="entry name" value="OLIGOPEPTIDE TRANSPORTER-RELATED"/>
    <property type="match status" value="1"/>
</dbReference>
<dbReference type="Pfam" id="PF00854">
    <property type="entry name" value="PTR2"/>
    <property type="match status" value="1"/>
</dbReference>
<dbReference type="SUPFAM" id="SSF103473">
    <property type="entry name" value="MFS general substrate transporter"/>
    <property type="match status" value="1"/>
</dbReference>
<organism>
    <name type="scientific">Arabidopsis thaliana</name>
    <name type="common">Mouse-ear cress</name>
    <dbReference type="NCBI Taxonomy" id="3702"/>
    <lineage>
        <taxon>Eukaryota</taxon>
        <taxon>Viridiplantae</taxon>
        <taxon>Streptophyta</taxon>
        <taxon>Embryophyta</taxon>
        <taxon>Tracheophyta</taxon>
        <taxon>Spermatophyta</taxon>
        <taxon>Magnoliopsida</taxon>
        <taxon>eudicotyledons</taxon>
        <taxon>Gunneridae</taxon>
        <taxon>Pentapetalae</taxon>
        <taxon>rosids</taxon>
        <taxon>malvids</taxon>
        <taxon>Brassicales</taxon>
        <taxon>Brassicaceae</taxon>
        <taxon>Camelineae</taxon>
        <taxon>Arabidopsis</taxon>
    </lineage>
</organism>
<reference key="1">
    <citation type="journal article" date="2000" name="Nature">
        <title>Sequence and analysis of chromosome 1 of the plant Arabidopsis thaliana.</title>
        <authorList>
            <person name="Theologis A."/>
            <person name="Ecker J.R."/>
            <person name="Palm C.J."/>
            <person name="Federspiel N.A."/>
            <person name="Kaul S."/>
            <person name="White O."/>
            <person name="Alonso J."/>
            <person name="Altafi H."/>
            <person name="Araujo R."/>
            <person name="Bowman C.L."/>
            <person name="Brooks S.Y."/>
            <person name="Buehler E."/>
            <person name="Chan A."/>
            <person name="Chao Q."/>
            <person name="Chen H."/>
            <person name="Cheuk R.F."/>
            <person name="Chin C.W."/>
            <person name="Chung M.K."/>
            <person name="Conn L."/>
            <person name="Conway A.B."/>
            <person name="Conway A.R."/>
            <person name="Creasy T.H."/>
            <person name="Dewar K."/>
            <person name="Dunn P."/>
            <person name="Etgu P."/>
            <person name="Feldblyum T.V."/>
            <person name="Feng J.-D."/>
            <person name="Fong B."/>
            <person name="Fujii C.Y."/>
            <person name="Gill J.E."/>
            <person name="Goldsmith A.D."/>
            <person name="Haas B."/>
            <person name="Hansen N.F."/>
            <person name="Hughes B."/>
            <person name="Huizar L."/>
            <person name="Hunter J.L."/>
            <person name="Jenkins J."/>
            <person name="Johnson-Hopson C."/>
            <person name="Khan S."/>
            <person name="Khaykin E."/>
            <person name="Kim C.J."/>
            <person name="Koo H.L."/>
            <person name="Kremenetskaia I."/>
            <person name="Kurtz D.B."/>
            <person name="Kwan A."/>
            <person name="Lam B."/>
            <person name="Langin-Hooper S."/>
            <person name="Lee A."/>
            <person name="Lee J.M."/>
            <person name="Lenz C.A."/>
            <person name="Li J.H."/>
            <person name="Li Y.-P."/>
            <person name="Lin X."/>
            <person name="Liu S.X."/>
            <person name="Liu Z.A."/>
            <person name="Luros J.S."/>
            <person name="Maiti R."/>
            <person name="Marziali A."/>
            <person name="Militscher J."/>
            <person name="Miranda M."/>
            <person name="Nguyen M."/>
            <person name="Nierman W.C."/>
            <person name="Osborne B.I."/>
            <person name="Pai G."/>
            <person name="Peterson J."/>
            <person name="Pham P.K."/>
            <person name="Rizzo M."/>
            <person name="Rooney T."/>
            <person name="Rowley D."/>
            <person name="Sakano H."/>
            <person name="Salzberg S.L."/>
            <person name="Schwartz J.R."/>
            <person name="Shinn P."/>
            <person name="Southwick A.M."/>
            <person name="Sun H."/>
            <person name="Tallon L.J."/>
            <person name="Tambunga G."/>
            <person name="Toriumi M.J."/>
            <person name="Town C.D."/>
            <person name="Utterback T."/>
            <person name="Van Aken S."/>
            <person name="Vaysberg M."/>
            <person name="Vysotskaia V.S."/>
            <person name="Walker M."/>
            <person name="Wu D."/>
            <person name="Yu G."/>
            <person name="Fraser C.M."/>
            <person name="Venter J.C."/>
            <person name="Davis R.W."/>
        </authorList>
    </citation>
    <scope>NUCLEOTIDE SEQUENCE [LARGE SCALE GENOMIC DNA]</scope>
    <source>
        <strain>cv. Columbia</strain>
    </source>
</reference>
<reference key="2">
    <citation type="journal article" date="2017" name="Plant J.">
        <title>Araport11: a complete reannotation of the Arabidopsis thaliana reference genome.</title>
        <authorList>
            <person name="Cheng C.Y."/>
            <person name="Krishnakumar V."/>
            <person name="Chan A.P."/>
            <person name="Thibaud-Nissen F."/>
            <person name="Schobel S."/>
            <person name="Town C.D."/>
        </authorList>
    </citation>
    <scope>GENOME REANNOTATION</scope>
    <source>
        <strain>cv. Columbia</strain>
    </source>
</reference>
<reference key="3">
    <citation type="journal article" date="2003" name="Science">
        <title>Empirical analysis of transcriptional activity in the Arabidopsis genome.</title>
        <authorList>
            <person name="Yamada K."/>
            <person name="Lim J."/>
            <person name="Dale J.M."/>
            <person name="Chen H."/>
            <person name="Shinn P."/>
            <person name="Palm C.J."/>
            <person name="Southwick A.M."/>
            <person name="Wu H.C."/>
            <person name="Kim C.J."/>
            <person name="Nguyen M."/>
            <person name="Pham P.K."/>
            <person name="Cheuk R.F."/>
            <person name="Karlin-Newmann G."/>
            <person name="Liu S.X."/>
            <person name="Lam B."/>
            <person name="Sakano H."/>
            <person name="Wu T."/>
            <person name="Yu G."/>
            <person name="Miranda M."/>
            <person name="Quach H.L."/>
            <person name="Tripp M."/>
            <person name="Chang C.H."/>
            <person name="Lee J.M."/>
            <person name="Toriumi M.J."/>
            <person name="Chan M.M."/>
            <person name="Tang C.C."/>
            <person name="Onodera C.S."/>
            <person name="Deng J.M."/>
            <person name="Akiyama K."/>
            <person name="Ansari Y."/>
            <person name="Arakawa T."/>
            <person name="Banh J."/>
            <person name="Banno F."/>
            <person name="Bowser L."/>
            <person name="Brooks S.Y."/>
            <person name="Carninci P."/>
            <person name="Chao Q."/>
            <person name="Choy N."/>
            <person name="Enju A."/>
            <person name="Goldsmith A.D."/>
            <person name="Gurjal M."/>
            <person name="Hansen N.F."/>
            <person name="Hayashizaki Y."/>
            <person name="Johnson-Hopson C."/>
            <person name="Hsuan V.W."/>
            <person name="Iida K."/>
            <person name="Karnes M."/>
            <person name="Khan S."/>
            <person name="Koesema E."/>
            <person name="Ishida J."/>
            <person name="Jiang P.X."/>
            <person name="Jones T."/>
            <person name="Kawai J."/>
            <person name="Kamiya A."/>
            <person name="Meyers C."/>
            <person name="Nakajima M."/>
            <person name="Narusaka M."/>
            <person name="Seki M."/>
            <person name="Sakurai T."/>
            <person name="Satou M."/>
            <person name="Tamse R."/>
            <person name="Vaysberg M."/>
            <person name="Wallender E.K."/>
            <person name="Wong C."/>
            <person name="Yamamura Y."/>
            <person name="Yuan S."/>
            <person name="Shinozaki K."/>
            <person name="Davis R.W."/>
            <person name="Theologis A."/>
            <person name="Ecker J.R."/>
        </authorList>
    </citation>
    <scope>NUCLEOTIDE SEQUENCE [LARGE SCALE MRNA]</scope>
    <source>
        <strain>cv. Columbia</strain>
    </source>
</reference>
<reference key="4">
    <citation type="journal article" date="2007" name="FEBS Lett.">
        <title>Nitrate transporters and peptide transporters.</title>
        <authorList>
            <person name="Tsay Y.F."/>
            <person name="Chiu C.C."/>
            <person name="Tsai C.B."/>
            <person name="Ho C.H."/>
            <person name="Hsu P.K."/>
        </authorList>
    </citation>
    <scope>TISSUE SPECIFICITY</scope>
    <scope>GENE FAMILY</scope>
</reference>
<reference key="5">
    <citation type="journal article" date="2010" name="Plant Cell">
        <title>The Arabidopsis nitrate transporter NRT1.8 functions in nitrate removal from the xylem sap and mediates cadmium tolerance.</title>
        <authorList>
            <person name="Li J.Y."/>
            <person name="Fu Y.L."/>
            <person name="Pike S.M."/>
            <person name="Bao J."/>
            <person name="Tian W."/>
            <person name="Zhang Y."/>
            <person name="Chen C.Z."/>
            <person name="Zhang Y."/>
            <person name="Li H.M."/>
            <person name="Huang J."/>
            <person name="Li L.G."/>
            <person name="Schroeder J.I."/>
            <person name="Gassmann W."/>
            <person name="Gong J.M."/>
        </authorList>
    </citation>
    <scope>GENE FAMILY</scope>
</reference>
<reference key="6">
    <citation type="journal article" date="2011" name="Plant Cell">
        <title>Arabidopsis nitrate transporter NRT1.9 is important in phloem nitrate transport.</title>
        <authorList>
            <person name="Wang Y.Y."/>
            <person name="Tsay Y.F."/>
        </authorList>
    </citation>
    <scope>FUNCTION</scope>
    <scope>BIOPHYSICOCHEMICAL PROPERTIES</scope>
    <scope>TISSUE SPECIFICITY</scope>
    <scope>INDUCTION BY NITRATE</scope>
    <scope>SUBCELLULAR LOCATION</scope>
    <scope>DISRUPTION PHENOTYPE</scope>
</reference>
<reference key="7">
    <citation type="journal article" date="2012" name="Nature">
        <title>NRT/PTR transporters are essential for translocation of glucosinolate defence compounds to seeds.</title>
        <authorList>
            <person name="Nour-Eldin H.H."/>
            <person name="Andersen T.G."/>
            <person name="Burow M."/>
            <person name="Madsen S.R."/>
            <person name="Jorgensen M.E."/>
            <person name="Olsen C.E."/>
            <person name="Dreyer I."/>
            <person name="Hedrich R."/>
            <person name="Geiger D."/>
            <person name="Halkier B.A."/>
        </authorList>
    </citation>
    <scope>FUNCTION</scope>
</reference>
<reference key="8">
    <citation type="journal article" date="2014" name="Trends Plant Sci.">
        <title>A unified nomenclature of NITRATE TRANSPORTER 1/PEPTIDE TRANSPORTER family members in plants.</title>
        <authorList>
            <person name="Leran S."/>
            <person name="Varala K."/>
            <person name="Boyer J.C."/>
            <person name="Chiurazzi M."/>
            <person name="Crawford N."/>
            <person name="Daniel-Vedele F."/>
            <person name="David L."/>
            <person name="Dickstein R."/>
            <person name="Fernandez E."/>
            <person name="Forde B."/>
            <person name="Gassmann W."/>
            <person name="Geiger D."/>
            <person name="Gojon A."/>
            <person name="Gong J.M."/>
            <person name="Halkier B.A."/>
            <person name="Harris J.M."/>
            <person name="Hedrich R."/>
            <person name="Limami A.M."/>
            <person name="Rentsch D."/>
            <person name="Seo M."/>
            <person name="Tsay Y.F."/>
            <person name="Zhang M."/>
            <person name="Coruzzi G."/>
            <person name="Lacombe B."/>
        </authorList>
    </citation>
    <scope>GENE FAMILY</scope>
    <scope>NOMENCLATURE</scope>
</reference>